<proteinExistence type="inferred from homology"/>
<reference key="1">
    <citation type="journal article" date="2004" name="Proc. Natl. Acad. Sci. U.S.A.">
        <title>The complete genomic sequence of Nocardia farcinica IFM 10152.</title>
        <authorList>
            <person name="Ishikawa J."/>
            <person name="Yamashita A."/>
            <person name="Mikami Y."/>
            <person name="Hoshino Y."/>
            <person name="Kurita H."/>
            <person name="Hotta K."/>
            <person name="Shiba T."/>
            <person name="Hattori M."/>
        </authorList>
    </citation>
    <scope>NUCLEOTIDE SEQUENCE [LARGE SCALE GENOMIC DNA]</scope>
    <source>
        <strain>IFM 10152</strain>
    </source>
</reference>
<dbReference type="EMBL" id="AP006618">
    <property type="protein sequence ID" value="BAD56603.1"/>
    <property type="molecule type" value="Genomic_DNA"/>
</dbReference>
<dbReference type="RefSeq" id="WP_011208288.1">
    <property type="nucleotide sequence ID" value="NC_006361.1"/>
</dbReference>
<dbReference type="SMR" id="Q5YYY8"/>
<dbReference type="STRING" id="247156.NFA_17570"/>
<dbReference type="GeneID" id="61132538"/>
<dbReference type="KEGG" id="nfa:NFA_17570"/>
<dbReference type="eggNOG" id="COG2001">
    <property type="taxonomic scope" value="Bacteria"/>
</dbReference>
<dbReference type="HOGENOM" id="CLU_107907_0_5_11"/>
<dbReference type="OrthoDB" id="9807753at2"/>
<dbReference type="Proteomes" id="UP000006820">
    <property type="component" value="Chromosome"/>
</dbReference>
<dbReference type="GO" id="GO:0005737">
    <property type="term" value="C:cytoplasm"/>
    <property type="evidence" value="ECO:0007669"/>
    <property type="project" value="UniProtKB-UniRule"/>
</dbReference>
<dbReference type="GO" id="GO:0009295">
    <property type="term" value="C:nucleoid"/>
    <property type="evidence" value="ECO:0007669"/>
    <property type="project" value="UniProtKB-SubCell"/>
</dbReference>
<dbReference type="GO" id="GO:0003700">
    <property type="term" value="F:DNA-binding transcription factor activity"/>
    <property type="evidence" value="ECO:0007669"/>
    <property type="project" value="UniProtKB-UniRule"/>
</dbReference>
<dbReference type="GO" id="GO:0000976">
    <property type="term" value="F:transcription cis-regulatory region binding"/>
    <property type="evidence" value="ECO:0007669"/>
    <property type="project" value="TreeGrafter"/>
</dbReference>
<dbReference type="GO" id="GO:2000143">
    <property type="term" value="P:negative regulation of DNA-templated transcription initiation"/>
    <property type="evidence" value="ECO:0007669"/>
    <property type="project" value="TreeGrafter"/>
</dbReference>
<dbReference type="CDD" id="cd16321">
    <property type="entry name" value="MraZ_C"/>
    <property type="match status" value="1"/>
</dbReference>
<dbReference type="CDD" id="cd16320">
    <property type="entry name" value="MraZ_N"/>
    <property type="match status" value="1"/>
</dbReference>
<dbReference type="Gene3D" id="3.40.1550.20">
    <property type="entry name" value="Transcriptional regulator MraZ domain"/>
    <property type="match status" value="1"/>
</dbReference>
<dbReference type="HAMAP" id="MF_01008">
    <property type="entry name" value="MraZ"/>
    <property type="match status" value="1"/>
</dbReference>
<dbReference type="InterPro" id="IPR003444">
    <property type="entry name" value="MraZ"/>
</dbReference>
<dbReference type="InterPro" id="IPR035644">
    <property type="entry name" value="MraZ_C"/>
</dbReference>
<dbReference type="InterPro" id="IPR020603">
    <property type="entry name" value="MraZ_dom"/>
</dbReference>
<dbReference type="InterPro" id="IPR035642">
    <property type="entry name" value="MraZ_N"/>
</dbReference>
<dbReference type="InterPro" id="IPR038619">
    <property type="entry name" value="MraZ_sf"/>
</dbReference>
<dbReference type="InterPro" id="IPR007159">
    <property type="entry name" value="SpoVT-AbrB_dom"/>
</dbReference>
<dbReference type="InterPro" id="IPR037914">
    <property type="entry name" value="SpoVT-AbrB_sf"/>
</dbReference>
<dbReference type="NCBIfam" id="TIGR00242">
    <property type="entry name" value="division/cell wall cluster transcriptional repressor MraZ"/>
    <property type="match status" value="1"/>
</dbReference>
<dbReference type="PANTHER" id="PTHR34701">
    <property type="entry name" value="TRANSCRIPTIONAL REGULATOR MRAZ"/>
    <property type="match status" value="1"/>
</dbReference>
<dbReference type="PANTHER" id="PTHR34701:SF1">
    <property type="entry name" value="TRANSCRIPTIONAL REGULATOR MRAZ"/>
    <property type="match status" value="1"/>
</dbReference>
<dbReference type="Pfam" id="PF02381">
    <property type="entry name" value="MraZ"/>
    <property type="match status" value="2"/>
</dbReference>
<dbReference type="SUPFAM" id="SSF89447">
    <property type="entry name" value="AbrB/MazE/MraZ-like"/>
    <property type="match status" value="1"/>
</dbReference>
<dbReference type="PROSITE" id="PS51740">
    <property type="entry name" value="SPOVT_ABRB"/>
    <property type="match status" value="2"/>
</dbReference>
<evidence type="ECO:0000255" key="1">
    <source>
        <dbReference type="HAMAP-Rule" id="MF_01008"/>
    </source>
</evidence>
<evidence type="ECO:0000255" key="2">
    <source>
        <dbReference type="PROSITE-ProRule" id="PRU01076"/>
    </source>
</evidence>
<sequence length="143" mass="15934">MFLGTYTPRLDDKGRLTLPAKFRDDLAGGLMVTKGQDHSLAVYPKEEFTALARRAAAASRSNPQARAFVRALAAGTDEQRPDAQGRITLSADHRRYANLSRDCVVIGSVDFLEIWDKQAWESYLAEHEEDYAQARDESLGGIF</sequence>
<keyword id="KW-0963">Cytoplasm</keyword>
<keyword id="KW-0238">DNA-binding</keyword>
<keyword id="KW-1185">Reference proteome</keyword>
<keyword id="KW-0677">Repeat</keyword>
<keyword id="KW-0804">Transcription</keyword>
<keyword id="KW-0805">Transcription regulation</keyword>
<comment type="subunit">
    <text evidence="1">Forms oligomers.</text>
</comment>
<comment type="subcellular location">
    <subcellularLocation>
        <location evidence="1">Cytoplasm</location>
        <location evidence="1">Nucleoid</location>
    </subcellularLocation>
</comment>
<comment type="similarity">
    <text evidence="1">Belongs to the MraZ family.</text>
</comment>
<feature type="chain" id="PRO_0000108516" description="Transcriptional regulator MraZ">
    <location>
        <begin position="1"/>
        <end position="143"/>
    </location>
</feature>
<feature type="domain" description="SpoVT-AbrB 1" evidence="2">
    <location>
        <begin position="5"/>
        <end position="47"/>
    </location>
</feature>
<feature type="domain" description="SpoVT-AbrB 2" evidence="2">
    <location>
        <begin position="76"/>
        <end position="119"/>
    </location>
</feature>
<organism>
    <name type="scientific">Nocardia farcinica (strain IFM 10152)</name>
    <dbReference type="NCBI Taxonomy" id="247156"/>
    <lineage>
        <taxon>Bacteria</taxon>
        <taxon>Bacillati</taxon>
        <taxon>Actinomycetota</taxon>
        <taxon>Actinomycetes</taxon>
        <taxon>Mycobacteriales</taxon>
        <taxon>Nocardiaceae</taxon>
        <taxon>Nocardia</taxon>
    </lineage>
</organism>
<gene>
    <name evidence="1" type="primary">mraZ</name>
    <name type="ordered locus">NFA_17570</name>
</gene>
<accession>Q5YYY8</accession>
<name>MRAZ_NOCFA</name>
<protein>
    <recommendedName>
        <fullName>Transcriptional regulator MraZ</fullName>
    </recommendedName>
</protein>